<dbReference type="EMBL" id="AB023164">
    <property type="protein sequence ID" value="BAA76791.3"/>
    <property type="status" value="ALT_INIT"/>
    <property type="molecule type" value="mRNA"/>
</dbReference>
<dbReference type="EMBL" id="AC010253">
    <property type="status" value="NOT_ANNOTATED_CDS"/>
    <property type="molecule type" value="Genomic_DNA"/>
</dbReference>
<dbReference type="EMBL" id="AC012607">
    <property type="status" value="NOT_ANNOTATED_CDS"/>
    <property type="molecule type" value="Genomic_DNA"/>
</dbReference>
<dbReference type="EMBL" id="AK126937">
    <property type="protein sequence ID" value="BAC86755.1"/>
    <property type="status" value="ALT_SEQ"/>
    <property type="molecule type" value="mRNA"/>
</dbReference>
<dbReference type="EMBL" id="AL137260">
    <property type="protein sequence ID" value="CAB70661.1"/>
    <property type="status" value="ALT_SEQ"/>
    <property type="molecule type" value="mRNA"/>
</dbReference>
<dbReference type="EMBL" id="BX538020">
    <property type="protein sequence ID" value="CAD97966.1"/>
    <property type="molecule type" value="mRNA"/>
</dbReference>
<dbReference type="EMBL" id="CR749441">
    <property type="protein sequence ID" value="CAH18279.1"/>
    <property type="molecule type" value="mRNA"/>
</dbReference>
<dbReference type="EMBL" id="BC004902">
    <property type="protein sequence ID" value="AAH04902.2"/>
    <property type="molecule type" value="mRNA"/>
</dbReference>
<dbReference type="CCDS" id="CCDS47187.1"/>
<dbReference type="PIR" id="T46331">
    <property type="entry name" value="T46331"/>
</dbReference>
<dbReference type="RefSeq" id="NP_056140.1">
    <property type="nucleotide sequence ID" value="NM_015325.3"/>
</dbReference>
<dbReference type="SMR" id="Q9Y2F5"/>
<dbReference type="BioGRID" id="116955">
    <property type="interactions" value="58"/>
</dbReference>
<dbReference type="ComplexPortal" id="CPX-2712">
    <property type="entry name" value="Little elongation complex, ELL variant"/>
</dbReference>
<dbReference type="ComplexPortal" id="CPX-2713">
    <property type="entry name" value="Little elongation complex, ELL2 variant"/>
</dbReference>
<dbReference type="ComplexPortal" id="CPX-2714">
    <property type="entry name" value="Little elongation complex, ELL3 variant"/>
</dbReference>
<dbReference type="CORUM" id="Q9Y2F5"/>
<dbReference type="FunCoup" id="Q9Y2F5">
    <property type="interactions" value="3071"/>
</dbReference>
<dbReference type="IntAct" id="Q9Y2F5">
    <property type="interactions" value="36"/>
</dbReference>
<dbReference type="MINT" id="Q9Y2F5"/>
<dbReference type="STRING" id="9606.ENSP00000296564"/>
<dbReference type="GlyGen" id="Q9Y2F5">
    <property type="glycosylation" value="3 sites, 1 O-linked glycan (2 sites)"/>
</dbReference>
<dbReference type="iPTMnet" id="Q9Y2F5"/>
<dbReference type="PhosphoSitePlus" id="Q9Y2F5"/>
<dbReference type="BioMuta" id="ICE1"/>
<dbReference type="DMDM" id="296439500"/>
<dbReference type="jPOST" id="Q9Y2F5"/>
<dbReference type="MassIVE" id="Q9Y2F5"/>
<dbReference type="PaxDb" id="9606-ENSP00000296564"/>
<dbReference type="PeptideAtlas" id="Q9Y2F5"/>
<dbReference type="ProteomicsDB" id="85753"/>
<dbReference type="Pumba" id="Q9Y2F5"/>
<dbReference type="Antibodypedia" id="64954">
    <property type="antibodies" value="42 antibodies from 9 providers"/>
</dbReference>
<dbReference type="Ensembl" id="ENST00000296564.9">
    <property type="protein sequence ID" value="ENSP00000296564.7"/>
    <property type="gene ID" value="ENSG00000164151.12"/>
</dbReference>
<dbReference type="GeneID" id="23379"/>
<dbReference type="KEGG" id="hsa:23379"/>
<dbReference type="MANE-Select" id="ENST00000296564.9">
    <property type="protein sequence ID" value="ENSP00000296564.7"/>
    <property type="RefSeq nucleotide sequence ID" value="NM_015325.3"/>
    <property type="RefSeq protein sequence ID" value="NP_056140.1"/>
</dbReference>
<dbReference type="UCSC" id="uc003jdm.6">
    <property type="organism name" value="human"/>
</dbReference>
<dbReference type="AGR" id="HGNC:29154"/>
<dbReference type="CTD" id="23379"/>
<dbReference type="DisGeNET" id="23379"/>
<dbReference type="GeneCards" id="ICE1"/>
<dbReference type="HGNC" id="HGNC:29154">
    <property type="gene designation" value="ICE1"/>
</dbReference>
<dbReference type="HPA" id="ENSG00000164151">
    <property type="expression patterns" value="Low tissue specificity"/>
</dbReference>
<dbReference type="MIM" id="617958">
    <property type="type" value="gene"/>
</dbReference>
<dbReference type="neXtProt" id="NX_Q9Y2F5"/>
<dbReference type="OpenTargets" id="ENSG00000164151"/>
<dbReference type="PharmGKB" id="PA162411094"/>
<dbReference type="VEuPathDB" id="HostDB:ENSG00000164151"/>
<dbReference type="eggNOG" id="ENOG502QX8H">
    <property type="taxonomic scope" value="Eukaryota"/>
</dbReference>
<dbReference type="GeneTree" id="ENSGT00950000183199"/>
<dbReference type="HOGENOM" id="CLU_001630_0_0_1"/>
<dbReference type="InParanoid" id="Q9Y2F5"/>
<dbReference type="OMA" id="YCYTGIR"/>
<dbReference type="OrthoDB" id="2238957at2759"/>
<dbReference type="PAN-GO" id="Q9Y2F5">
    <property type="GO annotations" value="0 GO annotations based on evolutionary models"/>
</dbReference>
<dbReference type="PhylomeDB" id="Q9Y2F5"/>
<dbReference type="TreeFam" id="TF330760"/>
<dbReference type="PathwayCommons" id="Q9Y2F5"/>
<dbReference type="Reactome" id="R-HSA-6807505">
    <property type="pathway name" value="RNA polymerase II transcribes snRNA genes"/>
</dbReference>
<dbReference type="SignaLink" id="Q9Y2F5"/>
<dbReference type="SIGNOR" id="Q9Y2F5"/>
<dbReference type="BioGRID-ORCS" id="23379">
    <property type="hits" value="561 hits in 1092 CRISPR screens"/>
</dbReference>
<dbReference type="CD-CODE" id="6F24707C">
    <property type="entry name" value="Cajal body"/>
</dbReference>
<dbReference type="ChiTaRS" id="ICE1">
    <property type="organism name" value="human"/>
</dbReference>
<dbReference type="GenomeRNAi" id="23379"/>
<dbReference type="Pharos" id="Q9Y2F5">
    <property type="development level" value="Tbio"/>
</dbReference>
<dbReference type="PRO" id="PR:Q9Y2F5"/>
<dbReference type="Proteomes" id="UP000005640">
    <property type="component" value="Chromosome 5"/>
</dbReference>
<dbReference type="RNAct" id="Q9Y2F5">
    <property type="molecule type" value="protein"/>
</dbReference>
<dbReference type="Bgee" id="ENSG00000164151">
    <property type="expression patterns" value="Expressed in sural nerve and 212 other cell types or tissues"/>
</dbReference>
<dbReference type="ExpressionAtlas" id="Q9Y2F5">
    <property type="expression patterns" value="baseline and differential"/>
</dbReference>
<dbReference type="GO" id="GO:0015030">
    <property type="term" value="C:Cajal body"/>
    <property type="evidence" value="ECO:0000314"/>
    <property type="project" value="UniProtKB"/>
</dbReference>
<dbReference type="GO" id="GO:0000791">
    <property type="term" value="C:euchromatin"/>
    <property type="evidence" value="ECO:0000314"/>
    <property type="project" value="UniProtKB"/>
</dbReference>
<dbReference type="GO" id="GO:0035363">
    <property type="term" value="C:histone locus body"/>
    <property type="evidence" value="ECO:0000314"/>
    <property type="project" value="UniProtKB"/>
</dbReference>
<dbReference type="GO" id="GO:0016604">
    <property type="term" value="C:nuclear body"/>
    <property type="evidence" value="ECO:0000314"/>
    <property type="project" value="HPA"/>
</dbReference>
<dbReference type="GO" id="GO:0005654">
    <property type="term" value="C:nucleoplasm"/>
    <property type="evidence" value="ECO:0000314"/>
    <property type="project" value="HPA"/>
</dbReference>
<dbReference type="GO" id="GO:0008023">
    <property type="term" value="C:transcription elongation factor complex"/>
    <property type="evidence" value="ECO:0000314"/>
    <property type="project" value="UniProtKB"/>
</dbReference>
<dbReference type="GO" id="GO:0030674">
    <property type="term" value="F:protein-macromolecule adaptor activity"/>
    <property type="evidence" value="ECO:0000314"/>
    <property type="project" value="UniProtKB"/>
</dbReference>
<dbReference type="GO" id="GO:0090316">
    <property type="term" value="P:positive regulation of intracellular protein transport"/>
    <property type="evidence" value="ECO:0000315"/>
    <property type="project" value="UniProtKB"/>
</dbReference>
<dbReference type="GO" id="GO:0031334">
    <property type="term" value="P:positive regulation of protein-containing complex assembly"/>
    <property type="evidence" value="ECO:0000315"/>
    <property type="project" value="UniProtKB"/>
</dbReference>
<dbReference type="GO" id="GO:0045945">
    <property type="term" value="P:positive regulation of transcription by RNA polymerase III"/>
    <property type="evidence" value="ECO:0000315"/>
    <property type="project" value="UniProtKB"/>
</dbReference>
<dbReference type="GO" id="GO:0042795">
    <property type="term" value="P:snRNA transcription by RNA polymerase II"/>
    <property type="evidence" value="ECO:0000315"/>
    <property type="project" value="UniProtKB"/>
</dbReference>
<dbReference type="GO" id="GO:0042796">
    <property type="term" value="P:snRNA transcription by RNA polymerase III"/>
    <property type="evidence" value="ECO:0000315"/>
    <property type="project" value="UniProtKB"/>
</dbReference>
<dbReference type="PANTHER" id="PTHR11852:SF4">
    <property type="entry name" value="LITTLE ELONGATION COMPLEX SUBUNIT 1"/>
    <property type="match status" value="1"/>
</dbReference>
<dbReference type="PANTHER" id="PTHR11852">
    <property type="entry name" value="PLATELET-ACTIVATING FACTOR ACETYLHYDROLASE"/>
    <property type="match status" value="1"/>
</dbReference>
<comment type="function">
    <text evidence="7 8">Component of the little elongation complex (LEC), a complex required to regulate small nuclear RNA (snRNA) gene transcription by RNA polymerase II and III (PubMed:22195968, PubMed:23932780). Specifically acts as a scaffold protein that promotes the LEC complex formation and recruitment and RNA polymerase II occupancy at snRNA genes in subnuclear bodies (PubMed:23932780).</text>
</comment>
<comment type="subunit">
    <text evidence="7 8">Component of the little elongation complex (LEC), at least composed of ELL (ELL, ELL2 or ELL3), ZC3H8, ICE1 and ICE2. Interacts (via N-terminus domain) with ELL. Interacts (via C-terminus domain) with ICE2 and ZC3H8.</text>
</comment>
<comment type="subcellular location">
    <subcellularLocation>
        <location evidence="7 8">Nucleus</location>
    </subcellularLocation>
    <subcellularLocation>
        <location evidence="8">Nucleus</location>
        <location evidence="8">Cajal body</location>
    </subcellularLocation>
    <text evidence="8">Colocalizes with COIL in subnuclear Cajal and histone locus bodies. Associates to transcriptionally active chromatin at snRNA genes.</text>
</comment>
<comment type="domain">
    <text evidence="7">The N-termimus domain is necessary and sufficient for its targeting to subnuclear cajal and histone locus bodies.</text>
</comment>
<comment type="similarity">
    <text evidence="9">Belongs to the ICE1 family.</text>
</comment>
<comment type="sequence caution" evidence="9">
    <conflict type="erroneous initiation">
        <sequence resource="EMBL-CDS" id="BAA76791"/>
    </conflict>
    <text>Extended N-terminus.</text>
</comment>
<comment type="sequence caution" evidence="9">
    <conflict type="miscellaneous discrepancy">
        <sequence resource="EMBL-CDS" id="BAC86755"/>
    </conflict>
    <text>Aberrant splicing.</text>
</comment>
<comment type="sequence caution" evidence="9">
    <conflict type="erroneous initiation">
        <sequence resource="EMBL-CDS" id="CAB70661"/>
    </conflict>
    <text>Truncated N-terminus.</text>
</comment>
<comment type="sequence caution" evidence="9">
    <conflict type="erroneous termination">
        <sequence resource="EMBL-CDS" id="CAB70661"/>
    </conflict>
    <text>Truncated C-terminus.</text>
</comment>
<feature type="chain" id="PRO_0000295724" description="Little elongation complex subunit 1">
    <location>
        <begin position="1"/>
        <end position="2266"/>
    </location>
</feature>
<feature type="region of interest" description="Disordered" evidence="3">
    <location>
        <begin position="223"/>
        <end position="259"/>
    </location>
</feature>
<feature type="region of interest" description="Disordered" evidence="3">
    <location>
        <begin position="517"/>
        <end position="540"/>
    </location>
</feature>
<feature type="region of interest" description="Disordered" evidence="3">
    <location>
        <begin position="591"/>
        <end position="623"/>
    </location>
</feature>
<feature type="region of interest" description="Disordered" evidence="3">
    <location>
        <begin position="925"/>
        <end position="955"/>
    </location>
</feature>
<feature type="region of interest" description="Disordered" evidence="3">
    <location>
        <begin position="977"/>
        <end position="1001"/>
    </location>
</feature>
<feature type="region of interest" description="Disordered" evidence="3">
    <location>
        <begin position="1107"/>
        <end position="1133"/>
    </location>
</feature>
<feature type="region of interest" description="Disordered" evidence="3">
    <location>
        <begin position="1295"/>
        <end position="1372"/>
    </location>
</feature>
<feature type="region of interest" description="Disordered" evidence="3">
    <location>
        <begin position="1467"/>
        <end position="1510"/>
    </location>
</feature>
<feature type="region of interest" description="Disordered" evidence="3">
    <location>
        <begin position="1543"/>
        <end position="1707"/>
    </location>
</feature>
<feature type="region of interest" description="Disordered" evidence="3">
    <location>
        <begin position="1809"/>
        <end position="1902"/>
    </location>
</feature>
<feature type="coiled-coil region" evidence="2">
    <location>
        <begin position="23"/>
        <end position="186"/>
    </location>
</feature>
<feature type="compositionally biased region" description="Polar residues" evidence="3">
    <location>
        <begin position="250"/>
        <end position="259"/>
    </location>
</feature>
<feature type="compositionally biased region" description="Acidic residues" evidence="3">
    <location>
        <begin position="608"/>
        <end position="617"/>
    </location>
</feature>
<feature type="compositionally biased region" description="Polar residues" evidence="3">
    <location>
        <begin position="940"/>
        <end position="955"/>
    </location>
</feature>
<feature type="compositionally biased region" description="Polar residues" evidence="3">
    <location>
        <begin position="984"/>
        <end position="998"/>
    </location>
</feature>
<feature type="compositionally biased region" description="Polar residues" evidence="3">
    <location>
        <begin position="1306"/>
        <end position="1319"/>
    </location>
</feature>
<feature type="compositionally biased region" description="Polar residues" evidence="3">
    <location>
        <begin position="1328"/>
        <end position="1344"/>
    </location>
</feature>
<feature type="compositionally biased region" description="Polar residues" evidence="3">
    <location>
        <begin position="1487"/>
        <end position="1505"/>
    </location>
</feature>
<feature type="compositionally biased region" description="Polar residues" evidence="3">
    <location>
        <begin position="1565"/>
        <end position="1588"/>
    </location>
</feature>
<feature type="compositionally biased region" description="Polar residues" evidence="3">
    <location>
        <begin position="1594"/>
        <end position="1605"/>
    </location>
</feature>
<feature type="compositionally biased region" description="Low complexity" evidence="3">
    <location>
        <begin position="1609"/>
        <end position="1620"/>
    </location>
</feature>
<feature type="compositionally biased region" description="Low complexity" evidence="3">
    <location>
        <begin position="1637"/>
        <end position="1671"/>
    </location>
</feature>
<feature type="compositionally biased region" description="Polar residues" evidence="3">
    <location>
        <begin position="1825"/>
        <end position="1843"/>
    </location>
</feature>
<feature type="compositionally biased region" description="Polar residues" evidence="3">
    <location>
        <begin position="1889"/>
        <end position="1901"/>
    </location>
</feature>
<feature type="modified residue" description="Phosphoserine" evidence="10 12 15">
    <location>
        <position position="255"/>
    </location>
</feature>
<feature type="modified residue" description="Phosphoserine" evidence="15">
    <location>
        <position position="533"/>
    </location>
</feature>
<feature type="modified residue" description="Phosphoserine" evidence="15">
    <location>
        <position position="558"/>
    </location>
</feature>
<feature type="modified residue" description="Phosphoserine" evidence="15">
    <location>
        <position position="589"/>
    </location>
</feature>
<feature type="modified residue" description="Phosphoserine" evidence="1">
    <location>
        <position position="707"/>
    </location>
</feature>
<feature type="modified residue" description="Phosphothreonine" evidence="16">
    <location>
        <position position="832"/>
    </location>
</feature>
<feature type="modified residue" description="Phosphoserine" evidence="15">
    <location>
        <position position="925"/>
    </location>
</feature>
<feature type="modified residue" description="Phosphoserine" evidence="12">
    <location>
        <position position="958"/>
    </location>
</feature>
<feature type="modified residue" description="N6-acetyllysine" evidence="11">
    <location>
        <position position="1218"/>
    </location>
</feature>
<feature type="modified residue" description="Phosphoserine" evidence="13">
    <location>
        <position position="1588"/>
    </location>
</feature>
<feature type="modified residue" description="Phosphoserine" evidence="1">
    <location>
        <position position="1617"/>
    </location>
</feature>
<feature type="modified residue" description="Phosphothreonine" evidence="12">
    <location>
        <position position="1642"/>
    </location>
</feature>
<feature type="modified residue" description="Phosphoserine" evidence="10 15">
    <location>
        <position position="1692"/>
    </location>
</feature>
<feature type="modified residue" description="Phosphoserine" evidence="10 15">
    <location>
        <position position="1697"/>
    </location>
</feature>
<feature type="modified residue" description="Phosphoserine" evidence="10 15">
    <location>
        <position position="1699"/>
    </location>
</feature>
<feature type="modified residue" description="Phosphoserine" evidence="10">
    <location>
        <position position="1701"/>
    </location>
</feature>
<feature type="modified residue" description="Phosphoserine" evidence="15">
    <location>
        <position position="1712"/>
    </location>
</feature>
<feature type="modified residue" description="Phosphoserine" evidence="15">
    <location>
        <position position="1838"/>
    </location>
</feature>
<feature type="modified residue" description="Phosphoserine" evidence="12 13 14 15">
    <location>
        <position position="1854"/>
    </location>
</feature>
<feature type="modified residue" description="Phosphoserine" evidence="10 12 15 16">
    <location>
        <position position="1903"/>
    </location>
</feature>
<feature type="sequence variant" id="VAR_033341" description="In dbSNP:rs2619844." evidence="4 5">
    <original>C</original>
    <variation>S</variation>
    <location>
        <position position="391"/>
    </location>
</feature>
<feature type="sequence variant" id="VAR_033342" description="In dbSNP:rs10475299.">
    <original>K</original>
    <variation>E</variation>
    <location>
        <position position="596"/>
    </location>
</feature>
<feature type="sequence variant" id="VAR_033343" description="In dbSNP:rs2578500." evidence="4 5 6">
    <original>V</original>
    <variation>I</variation>
    <location>
        <position position="901"/>
    </location>
</feature>
<feature type="sequence variant" id="VAR_033344" description="In dbSNP:rs3806873.">
    <original>T</original>
    <variation>A</variation>
    <location>
        <position position="1054"/>
    </location>
</feature>
<feature type="sequence variant" id="VAR_033345" description="In dbSNP:rs3806874.">
    <original>G</original>
    <variation>D</variation>
    <location>
        <position position="1058"/>
    </location>
</feature>
<feature type="sequence variant" id="VAR_033346" description="In dbSNP:rs10065646.">
    <original>Q</original>
    <variation>P</variation>
    <location>
        <position position="1597"/>
    </location>
</feature>
<feature type="sequence variant" id="VAR_055943" description="In dbSNP:rs3747731.">
    <original>P</original>
    <variation>L</variation>
    <location>
        <position position="1618"/>
    </location>
</feature>
<feature type="sequence conflict" description="In Ref. 4; BAC86755." evidence="9" ref="4">
    <original>T</original>
    <variation>S</variation>
    <location>
        <position position="465"/>
    </location>
</feature>
<feature type="sequence conflict" description="In Ref. 5; CAD97966." evidence="9" ref="5">
    <original>P</original>
    <variation>G</variation>
    <location>
        <position position="757"/>
    </location>
</feature>
<feature type="sequence conflict" description="In Ref. 5; CAH18279." evidence="9" ref="5">
    <original>K</original>
    <variation>R</variation>
    <location>
        <position position="821"/>
    </location>
</feature>
<feature type="sequence conflict" description="In Ref. 5; CAH18279." evidence="9" ref="5">
    <original>E</original>
    <variation>V</variation>
    <location>
        <position position="1112"/>
    </location>
</feature>
<feature type="sequence conflict" description="In Ref. 5; CAD97966." evidence="9" ref="5">
    <original>D</original>
    <variation>G</variation>
    <location>
        <position position="1186"/>
    </location>
</feature>
<feature type="sequence conflict" description="In Ref. 5; CAD97966." evidence="9" ref="5">
    <original>Y</original>
    <variation>F</variation>
    <location>
        <position position="1756"/>
    </location>
</feature>
<gene>
    <name type="primary">ICE1</name>
    <name type="synonym">KIAA0947</name>
</gene>
<name>ICE1_HUMAN</name>
<evidence type="ECO:0000250" key="1">
    <source>
        <dbReference type="UniProtKB" id="E9Q286"/>
    </source>
</evidence>
<evidence type="ECO:0000255" key="2"/>
<evidence type="ECO:0000256" key="3">
    <source>
        <dbReference type="SAM" id="MobiDB-lite"/>
    </source>
</evidence>
<evidence type="ECO:0000269" key="4">
    <source>
    </source>
</evidence>
<evidence type="ECO:0000269" key="5">
    <source>
    </source>
</evidence>
<evidence type="ECO:0000269" key="6">
    <source>
    </source>
</evidence>
<evidence type="ECO:0000269" key="7">
    <source>
    </source>
</evidence>
<evidence type="ECO:0000269" key="8">
    <source>
    </source>
</evidence>
<evidence type="ECO:0000305" key="9"/>
<evidence type="ECO:0007744" key="10">
    <source>
    </source>
</evidence>
<evidence type="ECO:0007744" key="11">
    <source>
    </source>
</evidence>
<evidence type="ECO:0007744" key="12">
    <source>
    </source>
</evidence>
<evidence type="ECO:0007744" key="13">
    <source>
    </source>
</evidence>
<evidence type="ECO:0007744" key="14">
    <source>
    </source>
</evidence>
<evidence type="ECO:0007744" key="15">
    <source>
    </source>
</evidence>
<evidence type="ECO:0007744" key="16">
    <source>
    </source>
</evidence>
<organism>
    <name type="scientific">Homo sapiens</name>
    <name type="common">Human</name>
    <dbReference type="NCBI Taxonomy" id="9606"/>
    <lineage>
        <taxon>Eukaryota</taxon>
        <taxon>Metazoa</taxon>
        <taxon>Chordata</taxon>
        <taxon>Craniata</taxon>
        <taxon>Vertebrata</taxon>
        <taxon>Euteleostomi</taxon>
        <taxon>Mammalia</taxon>
        <taxon>Eutheria</taxon>
        <taxon>Euarchontoglires</taxon>
        <taxon>Primates</taxon>
        <taxon>Haplorrhini</taxon>
        <taxon>Catarrhini</taxon>
        <taxon>Hominidae</taxon>
        <taxon>Homo</taxon>
    </lineage>
</organism>
<keyword id="KW-0007">Acetylation</keyword>
<keyword id="KW-0175">Coiled coil</keyword>
<keyword id="KW-0539">Nucleus</keyword>
<keyword id="KW-0597">Phosphoprotein</keyword>
<keyword id="KW-1267">Proteomics identification</keyword>
<keyword id="KW-1185">Reference proteome</keyword>
<keyword id="KW-0804">Transcription</keyword>
<keyword id="KW-0805">Transcription regulation</keyword>
<accession>Q9Y2F5</accession>
<accession>Q68DE1</accession>
<accession>Q6ZT40</accession>
<accession>Q7L587</accession>
<accession>Q7Z3A9</accession>
<accession>Q9NTH9</accession>
<sequence length="2266" mass="247891">MMPGETHSAAPGTAADLSRCQGCASLQQNLNEYVEALITLKQKIINTDNLLTEYQKKCDELQFARRENSNLHHQVEEMLQKISPLQKCQEELGSLKAELEEKKSSLKLYQDTHQEYARVKEECLKSDAQKKKLEAKVKKLQEAAVKQTQDFKQLRNEKKILEKEFKKTQERLDEFSKQKNEKELRHIGTQISSDSYGSIDKRKVKLLLKELWLCVNTTHRLPGEGSRCVPEKPAKAITSSRVPGEDGTLPPTQGSPLRTSNVQTCLTKLSMEIKEDFLCQNVEKQSSSGTNCSSDHVFNENGNLEVLVQSHRDGGSTEFVDHDHFFDEDLQAAIDFFKLPPPLLSPVPSPPPMSSPHPGSLPSSFAPETYFGEYTDSSDNDSVQLRNSAECVSEDDTTESQNYFGSLRKNKGSGTWEEKPKSHEAIQALNTWEVNKVTTSGLETFTATLRESSATHSLVGEKHWTTASRSMSDRKRDILHETKTQMEVREMDKSVQTEKTIHKLTRGLCIERLSASPAQEKEAAPGKSELCSSPLGKRPLNELMESEGKTVLSKMMGSPKSEFTKWTRINEITSEPDRITVSGHFHRLSRELEKEKEDTQGFTLGESPESEDDDSGDGMDVAGLDIETSFSSSSTLVALSVGSNPQSSSGLDCGNDTDITTKVFSTEPHHSEHKLQTKTLNTLHLQSEPPECSIGGNNLENSLCALSPELGASNFNDQKSSGIEYTKVVKGLTKIHSLPRSVFMKATKDGQCESQDPRIELTLNKPDFTSLIGSQAALIKSGLGFVKSTSWHHSDLLRKGGEESLRAKSEHEQKTSHQLQKAMPFLQNRGPTPKPDLLRENNNPVEFKTTASVLPNQVSVITKQTRPEKVQSAKLEHLRPHRVEPTLVTENSGNKTGMSTVAKCDGERDDTTQNITEVAAVKSISPEVSASRRKLDFNSPGGSSPVENSDCSTNSRLSFSPENILIQNQDIVREAAVQGDGQKQRQPQATDLDSSGTHGSEMLPATEVTVSGGFSVEETSCGDTGRSGGEALAVANDSTSTPQNANGLWKLKSTTPGGALPECFGTTDTTFSSAFCRKHGETQDTSQSSLPGTLHCYTGIREGGDDTEVESEAFSCSEGSEQQDAPDDSQKNLGDTDAAVAEVRPSLEVGYLTSALQDFNISTFSELDRLSTSEVVMFLESCQLGDYSSGDSVSECSSKGTLSKEMNKELKASEIGEKYRKQPCEEETLGTCEEWIESEEDDYSLKNTSQLTQCSLETLSEVLTKIRQELQTNSEDCNGKDTGSLLLLNVNNNMTTENLKEKSPFRETTGSSSHASEPTPQAAALDTEGSSPISGMPQNENPQSRPEARSDAGRQTDGGEEDLPEPVEPSALCSDSVMEPSIEQSSNCEAETTFQCQIATVTSEVINVLINKDQNLVIEKGDNWTIISGVAVLPHVDQVTLCDIPGDIPISQDQGELEAGCIPVTSAEKSPEASHTGPAFQEAPCGNNLSCPQEDVSSSGQSTNFDKSRLRNRPVKPSIWISSQIYDQNFETQIVASDHTYYNSKLEPSGKNKNRSKISNKDQSNKPVKTSASSRVETHQSEVAQSFSGEKANTKTQRSQTQTILANADTSTPTDCSPDTLSKIRQEVGPPLPPLLAPLIATPPRTSQPLSPLISSSSPSSPASPVGQVSPFRETPVPPAMSPWPEDPRRASPPDPSPSPSAASASERVVPSPLQFCAATPKHALPVPGRLPPCASGHAAVGGPQENSVKILDTMYPELSARARTLNILKGNIQLTRGPPADCKNLPGPASAMIGFKTITSAATAFVKTGSSSGGDCNQDKSRDLGTQQDSSGKRTLSTSTLRSAKRLRLDTGSPEPETRGVTAEGIHKNLPGNLPPAEVATTNEERSCSSPAVSAVSQLPLSPKETVESHDKAIANALKKIAEFSFDLLPVIRSHVYVGNISKKPVMRDQEKEVVYEFSTTKKHLAECLLHSILSELKIQKISMDHNYIHALCRVYVGICRQLGDLERARLFCYSLLKEDFPESEKLTLFIANMWHDIFLSQSVINKAMQLVARQRAKGEVLNCLRAFLNWEKNAPVDVGFMVSKLLLTIQLCPKTEFQPSEKFGEDLSDNTWEYIFAIDLLCCHQKWIWTHDNIISKELWPVMDKWIKYRKGHANIAYTPDIIIASILRLIGRLGQLGLKEGFPSAVKNISSVIGMFIQHAHDEDIPWGIQLAAVYALCDLSPSNPAEISKILEAWRREASKSVPSAIVSCLEEVSALSTEELG</sequence>
<proteinExistence type="evidence at protein level"/>
<reference key="1">
    <citation type="journal article" date="1999" name="DNA Res.">
        <title>Prediction of the coding sequences of unidentified human genes. XIII. The complete sequences of 100 new cDNA clones from brain which code for large proteins in vitro.</title>
        <authorList>
            <person name="Nagase T."/>
            <person name="Ishikawa K."/>
            <person name="Suyama M."/>
            <person name="Kikuno R."/>
            <person name="Hirosawa M."/>
            <person name="Miyajima N."/>
            <person name="Tanaka A."/>
            <person name="Kotani H."/>
            <person name="Nomura N."/>
            <person name="Ohara O."/>
        </authorList>
    </citation>
    <scope>NUCLEOTIDE SEQUENCE [LARGE SCALE MRNA]</scope>
    <scope>VARIANTS SER-391 AND ILE-901</scope>
    <source>
        <tissue>Brain</tissue>
    </source>
</reference>
<reference key="2">
    <citation type="journal article" date="2002" name="DNA Res.">
        <title>Construction of expression-ready cDNA clones for KIAA genes: manual curation of 330 KIAA cDNA clones.</title>
        <authorList>
            <person name="Nakajima D."/>
            <person name="Okazaki N."/>
            <person name="Yamakawa H."/>
            <person name="Kikuno R."/>
            <person name="Ohara O."/>
            <person name="Nagase T."/>
        </authorList>
    </citation>
    <scope>SEQUENCE REVISION</scope>
</reference>
<reference key="3">
    <citation type="journal article" date="2004" name="Nature">
        <title>The DNA sequence and comparative analysis of human chromosome 5.</title>
        <authorList>
            <person name="Schmutz J."/>
            <person name="Martin J."/>
            <person name="Terry A."/>
            <person name="Couronne O."/>
            <person name="Grimwood J."/>
            <person name="Lowry S."/>
            <person name="Gordon L.A."/>
            <person name="Scott D."/>
            <person name="Xie G."/>
            <person name="Huang W."/>
            <person name="Hellsten U."/>
            <person name="Tran-Gyamfi M."/>
            <person name="She X."/>
            <person name="Prabhakar S."/>
            <person name="Aerts A."/>
            <person name="Altherr M."/>
            <person name="Bajorek E."/>
            <person name="Black S."/>
            <person name="Branscomb E."/>
            <person name="Caoile C."/>
            <person name="Challacombe J.F."/>
            <person name="Chan Y.M."/>
            <person name="Denys M."/>
            <person name="Detter J.C."/>
            <person name="Escobar J."/>
            <person name="Flowers D."/>
            <person name="Fotopulos D."/>
            <person name="Glavina T."/>
            <person name="Gomez M."/>
            <person name="Gonzales E."/>
            <person name="Goodstein D."/>
            <person name="Grigoriev I."/>
            <person name="Groza M."/>
            <person name="Hammon N."/>
            <person name="Hawkins T."/>
            <person name="Haydu L."/>
            <person name="Israni S."/>
            <person name="Jett J."/>
            <person name="Kadner K."/>
            <person name="Kimball H."/>
            <person name="Kobayashi A."/>
            <person name="Lopez F."/>
            <person name="Lou Y."/>
            <person name="Martinez D."/>
            <person name="Medina C."/>
            <person name="Morgan J."/>
            <person name="Nandkeshwar R."/>
            <person name="Noonan J.P."/>
            <person name="Pitluck S."/>
            <person name="Pollard M."/>
            <person name="Predki P."/>
            <person name="Priest J."/>
            <person name="Ramirez L."/>
            <person name="Retterer J."/>
            <person name="Rodriguez A."/>
            <person name="Rogers S."/>
            <person name="Salamov A."/>
            <person name="Salazar A."/>
            <person name="Thayer N."/>
            <person name="Tice H."/>
            <person name="Tsai M."/>
            <person name="Ustaszewska A."/>
            <person name="Vo N."/>
            <person name="Wheeler J."/>
            <person name="Wu K."/>
            <person name="Yang J."/>
            <person name="Dickson M."/>
            <person name="Cheng J.-F."/>
            <person name="Eichler E.E."/>
            <person name="Olsen A."/>
            <person name="Pennacchio L.A."/>
            <person name="Rokhsar D.S."/>
            <person name="Richardson P."/>
            <person name="Lucas S.M."/>
            <person name="Myers R.M."/>
            <person name="Rubin E.M."/>
        </authorList>
    </citation>
    <scope>NUCLEOTIDE SEQUENCE [LARGE SCALE GENOMIC DNA]</scope>
</reference>
<reference key="4">
    <citation type="journal article" date="2004" name="Nat. Genet.">
        <title>Complete sequencing and characterization of 21,243 full-length human cDNAs.</title>
        <authorList>
            <person name="Ota T."/>
            <person name="Suzuki Y."/>
            <person name="Nishikawa T."/>
            <person name="Otsuki T."/>
            <person name="Sugiyama T."/>
            <person name="Irie R."/>
            <person name="Wakamatsu A."/>
            <person name="Hayashi K."/>
            <person name="Sato H."/>
            <person name="Nagai K."/>
            <person name="Kimura K."/>
            <person name="Makita H."/>
            <person name="Sekine M."/>
            <person name="Obayashi M."/>
            <person name="Nishi T."/>
            <person name="Shibahara T."/>
            <person name="Tanaka T."/>
            <person name="Ishii S."/>
            <person name="Yamamoto J."/>
            <person name="Saito K."/>
            <person name="Kawai Y."/>
            <person name="Isono Y."/>
            <person name="Nakamura Y."/>
            <person name="Nagahari K."/>
            <person name="Murakami K."/>
            <person name="Yasuda T."/>
            <person name="Iwayanagi T."/>
            <person name="Wagatsuma M."/>
            <person name="Shiratori A."/>
            <person name="Sudo H."/>
            <person name="Hosoiri T."/>
            <person name="Kaku Y."/>
            <person name="Kodaira H."/>
            <person name="Kondo H."/>
            <person name="Sugawara M."/>
            <person name="Takahashi M."/>
            <person name="Kanda K."/>
            <person name="Yokoi T."/>
            <person name="Furuya T."/>
            <person name="Kikkawa E."/>
            <person name="Omura Y."/>
            <person name="Abe K."/>
            <person name="Kamihara K."/>
            <person name="Katsuta N."/>
            <person name="Sato K."/>
            <person name="Tanikawa M."/>
            <person name="Yamazaki M."/>
            <person name="Ninomiya K."/>
            <person name="Ishibashi T."/>
            <person name="Yamashita H."/>
            <person name="Murakawa K."/>
            <person name="Fujimori K."/>
            <person name="Tanai H."/>
            <person name="Kimata M."/>
            <person name="Watanabe M."/>
            <person name="Hiraoka S."/>
            <person name="Chiba Y."/>
            <person name="Ishida S."/>
            <person name="Ono Y."/>
            <person name="Takiguchi S."/>
            <person name="Watanabe S."/>
            <person name="Yosida M."/>
            <person name="Hotuta T."/>
            <person name="Kusano J."/>
            <person name="Kanehori K."/>
            <person name="Takahashi-Fujii A."/>
            <person name="Hara H."/>
            <person name="Tanase T.-O."/>
            <person name="Nomura Y."/>
            <person name="Togiya S."/>
            <person name="Komai F."/>
            <person name="Hara R."/>
            <person name="Takeuchi K."/>
            <person name="Arita M."/>
            <person name="Imose N."/>
            <person name="Musashino K."/>
            <person name="Yuuki H."/>
            <person name="Oshima A."/>
            <person name="Sasaki N."/>
            <person name="Aotsuka S."/>
            <person name="Yoshikawa Y."/>
            <person name="Matsunawa H."/>
            <person name="Ichihara T."/>
            <person name="Shiohata N."/>
            <person name="Sano S."/>
            <person name="Moriya S."/>
            <person name="Momiyama H."/>
            <person name="Satoh N."/>
            <person name="Takami S."/>
            <person name="Terashima Y."/>
            <person name="Suzuki O."/>
            <person name="Nakagawa S."/>
            <person name="Senoh A."/>
            <person name="Mizoguchi H."/>
            <person name="Goto Y."/>
            <person name="Shimizu F."/>
            <person name="Wakebe H."/>
            <person name="Hishigaki H."/>
            <person name="Watanabe T."/>
            <person name="Sugiyama A."/>
            <person name="Takemoto M."/>
            <person name="Kawakami B."/>
            <person name="Yamazaki M."/>
            <person name="Watanabe K."/>
            <person name="Kumagai A."/>
            <person name="Itakura S."/>
            <person name="Fukuzumi Y."/>
            <person name="Fujimori Y."/>
            <person name="Komiyama M."/>
            <person name="Tashiro H."/>
            <person name="Tanigami A."/>
            <person name="Fujiwara T."/>
            <person name="Ono T."/>
            <person name="Yamada K."/>
            <person name="Fujii Y."/>
            <person name="Ozaki K."/>
            <person name="Hirao M."/>
            <person name="Ohmori Y."/>
            <person name="Kawabata A."/>
            <person name="Hikiji T."/>
            <person name="Kobatake N."/>
            <person name="Inagaki H."/>
            <person name="Ikema Y."/>
            <person name="Okamoto S."/>
            <person name="Okitani R."/>
            <person name="Kawakami T."/>
            <person name="Noguchi S."/>
            <person name="Itoh T."/>
            <person name="Shigeta K."/>
            <person name="Senba T."/>
            <person name="Matsumura K."/>
            <person name="Nakajima Y."/>
            <person name="Mizuno T."/>
            <person name="Morinaga M."/>
            <person name="Sasaki M."/>
            <person name="Togashi T."/>
            <person name="Oyama M."/>
            <person name="Hata H."/>
            <person name="Watanabe M."/>
            <person name="Komatsu T."/>
            <person name="Mizushima-Sugano J."/>
            <person name="Satoh T."/>
            <person name="Shirai Y."/>
            <person name="Takahashi Y."/>
            <person name="Nakagawa K."/>
            <person name="Okumura K."/>
            <person name="Nagase T."/>
            <person name="Nomura N."/>
            <person name="Kikuchi H."/>
            <person name="Masuho Y."/>
            <person name="Yamashita R."/>
            <person name="Nakai K."/>
            <person name="Yada T."/>
            <person name="Nakamura Y."/>
            <person name="Ohara O."/>
            <person name="Isogai T."/>
            <person name="Sugano S."/>
        </authorList>
    </citation>
    <scope>NUCLEOTIDE SEQUENCE [LARGE SCALE MRNA] OF 1-1090</scope>
    <scope>VARIANTS SER-391 AND ILE-901</scope>
    <source>
        <tissue>Brain</tissue>
    </source>
</reference>
<reference key="5">
    <citation type="journal article" date="2007" name="BMC Genomics">
        <title>The full-ORF clone resource of the German cDNA consortium.</title>
        <authorList>
            <person name="Bechtel S."/>
            <person name="Rosenfelder H."/>
            <person name="Duda A."/>
            <person name="Schmidt C.P."/>
            <person name="Ernst U."/>
            <person name="Wellenreuther R."/>
            <person name="Mehrle A."/>
            <person name="Schuster C."/>
            <person name="Bahr A."/>
            <person name="Bloecker H."/>
            <person name="Heubner D."/>
            <person name="Hoerlein A."/>
            <person name="Michel G."/>
            <person name="Wedler H."/>
            <person name="Koehrer K."/>
            <person name="Ottenwaelder B."/>
            <person name="Poustka A."/>
            <person name="Wiemann S."/>
            <person name="Schupp I."/>
        </authorList>
    </citation>
    <scope>NUCLEOTIDE SEQUENCE [LARGE SCALE MRNA] OF 163-2266</scope>
    <scope>VARIANT ILE-901</scope>
    <source>
        <tissue>Amygdala</tissue>
        <tissue>Retina</tissue>
    </source>
</reference>
<reference key="6">
    <citation type="journal article" date="2004" name="Genome Res.">
        <title>The status, quality, and expansion of the NIH full-length cDNA project: the Mammalian Gene Collection (MGC).</title>
        <authorList>
            <consortium name="The MGC Project Team"/>
        </authorList>
    </citation>
    <scope>NUCLEOTIDE SEQUENCE [LARGE SCALE MRNA] OF 1746-2266</scope>
    <source>
        <tissue>Uterus</tissue>
    </source>
</reference>
<reference key="7">
    <citation type="journal article" date="2006" name="Cell">
        <title>Global, in vivo, and site-specific phosphorylation dynamics in signaling networks.</title>
        <authorList>
            <person name="Olsen J.V."/>
            <person name="Blagoev B."/>
            <person name="Gnad F."/>
            <person name="Macek B."/>
            <person name="Kumar C."/>
            <person name="Mortensen P."/>
            <person name="Mann M."/>
        </authorList>
    </citation>
    <scope>IDENTIFICATION BY MASS SPECTROMETRY [LARGE SCALE ANALYSIS]</scope>
    <source>
        <tissue>Cervix carcinoma</tissue>
    </source>
</reference>
<reference key="8">
    <citation type="journal article" date="2008" name="Mol. Cell">
        <title>Kinase-selective enrichment enables quantitative phosphoproteomics of the kinome across the cell cycle.</title>
        <authorList>
            <person name="Daub H."/>
            <person name="Olsen J.V."/>
            <person name="Bairlein M."/>
            <person name="Gnad F."/>
            <person name="Oppermann F.S."/>
            <person name="Korner R."/>
            <person name="Greff Z."/>
            <person name="Keri G."/>
            <person name="Stemmann O."/>
            <person name="Mann M."/>
        </authorList>
    </citation>
    <scope>IDENTIFICATION BY MASS SPECTROMETRY [LARGE SCALE ANALYSIS]</scope>
    <source>
        <tissue>Cervix carcinoma</tissue>
    </source>
</reference>
<reference key="9">
    <citation type="journal article" date="2008" name="Proc. Natl. Acad. Sci. U.S.A.">
        <title>A quantitative atlas of mitotic phosphorylation.</title>
        <authorList>
            <person name="Dephoure N."/>
            <person name="Zhou C."/>
            <person name="Villen J."/>
            <person name="Beausoleil S.A."/>
            <person name="Bakalarski C.E."/>
            <person name="Elledge S.J."/>
            <person name="Gygi S.P."/>
        </authorList>
    </citation>
    <scope>PHOSPHORYLATION [LARGE SCALE ANALYSIS] AT SER-255; SER-1692; SER-1697; SER-1699; SER-1701 AND SER-1903</scope>
    <scope>IDENTIFICATION BY MASS SPECTROMETRY [LARGE SCALE ANALYSIS]</scope>
    <source>
        <tissue>Cervix carcinoma</tissue>
    </source>
</reference>
<reference key="10">
    <citation type="journal article" date="2009" name="Anal. Chem.">
        <title>Lys-N and trypsin cover complementary parts of the phosphoproteome in a refined SCX-based approach.</title>
        <authorList>
            <person name="Gauci S."/>
            <person name="Helbig A.O."/>
            <person name="Slijper M."/>
            <person name="Krijgsveld J."/>
            <person name="Heck A.J."/>
            <person name="Mohammed S."/>
        </authorList>
    </citation>
    <scope>IDENTIFICATION BY MASS SPECTROMETRY [LARGE SCALE ANALYSIS]</scope>
</reference>
<reference key="11">
    <citation type="journal article" date="2009" name="Sci. Signal.">
        <title>Quantitative phosphoproteomic analysis of T cell receptor signaling reveals system-wide modulation of protein-protein interactions.</title>
        <authorList>
            <person name="Mayya V."/>
            <person name="Lundgren D.H."/>
            <person name="Hwang S.-I."/>
            <person name="Rezaul K."/>
            <person name="Wu L."/>
            <person name="Eng J.K."/>
            <person name="Rodionov V."/>
            <person name="Han D.K."/>
        </authorList>
    </citation>
    <scope>PHOSPHORYLATION [LARGE SCALE ANALYSIS] AT SER-255; SER-958; THR-1642; SER-1854 AND SER-1903</scope>
    <scope>IDENTIFICATION BY MASS SPECTROMETRY [LARGE SCALE ANALYSIS]</scope>
    <source>
        <tissue>Leukemic T-cell</tissue>
    </source>
</reference>
<reference key="12">
    <citation type="journal article" date="2009" name="Science">
        <title>Lysine acetylation targets protein complexes and co-regulates major cellular functions.</title>
        <authorList>
            <person name="Choudhary C."/>
            <person name="Kumar C."/>
            <person name="Gnad F."/>
            <person name="Nielsen M.L."/>
            <person name="Rehman M."/>
            <person name="Walther T.C."/>
            <person name="Olsen J.V."/>
            <person name="Mann M."/>
        </authorList>
    </citation>
    <scope>ACETYLATION [LARGE SCALE ANALYSIS] AT LYS-1218</scope>
    <scope>IDENTIFICATION BY MASS SPECTROMETRY [LARGE SCALE ANALYSIS]</scope>
</reference>
<reference key="13">
    <citation type="journal article" date="2010" name="Sci. Signal.">
        <title>Quantitative phosphoproteomics reveals widespread full phosphorylation site occupancy during mitosis.</title>
        <authorList>
            <person name="Olsen J.V."/>
            <person name="Vermeulen M."/>
            <person name="Santamaria A."/>
            <person name="Kumar C."/>
            <person name="Miller M.L."/>
            <person name="Jensen L.J."/>
            <person name="Gnad F."/>
            <person name="Cox J."/>
            <person name="Jensen T.S."/>
            <person name="Nigg E.A."/>
            <person name="Brunak S."/>
            <person name="Mann M."/>
        </authorList>
    </citation>
    <scope>PHOSPHORYLATION [LARGE SCALE ANALYSIS] AT SER-1588 AND SER-1854</scope>
    <scope>IDENTIFICATION BY MASS SPECTROMETRY [LARGE SCALE ANALYSIS]</scope>
    <source>
        <tissue>Cervix carcinoma</tissue>
    </source>
</reference>
<reference key="14">
    <citation type="journal article" date="2011" name="Mol. Cell">
        <title>The little elongation complex regulates small nuclear RNA transcription.</title>
        <authorList>
            <person name="Smith E.R."/>
            <person name="Lin C."/>
            <person name="Garrett A.S."/>
            <person name="Thornton J."/>
            <person name="Mohaghegh N."/>
            <person name="Hu D."/>
            <person name="Jackson J."/>
            <person name="Saraf A."/>
            <person name="Swanson S.K."/>
            <person name="Seidel C."/>
            <person name="Florens L."/>
            <person name="Washburn M.P."/>
            <person name="Eissenberg J.C."/>
            <person name="Shilatifard A."/>
        </authorList>
    </citation>
    <scope>FUNCTION</scope>
    <scope>SUBCELLULAR LOCATION</scope>
    <scope>IDENTIFICATION IN THE LEC COMPLEX</scope>
    <scope>INTERACTION WITH ELL</scope>
</reference>
<reference key="15">
    <citation type="journal article" date="2011" name="Sci. Signal.">
        <title>System-wide temporal characterization of the proteome and phosphoproteome of human embryonic stem cell differentiation.</title>
        <authorList>
            <person name="Rigbolt K.T."/>
            <person name="Prokhorova T.A."/>
            <person name="Akimov V."/>
            <person name="Henningsen J."/>
            <person name="Johansen P.T."/>
            <person name="Kratchmarova I."/>
            <person name="Kassem M."/>
            <person name="Mann M."/>
            <person name="Olsen J.V."/>
            <person name="Blagoev B."/>
        </authorList>
    </citation>
    <scope>PHOSPHORYLATION [LARGE SCALE ANALYSIS] AT SER-1854</scope>
    <scope>IDENTIFICATION BY MASS SPECTROMETRY [LARGE SCALE ANALYSIS]</scope>
</reference>
<reference key="16">
    <citation type="journal article" date="2013" name="J. Proteome Res.">
        <title>Toward a comprehensive characterization of a human cancer cell phosphoproteome.</title>
        <authorList>
            <person name="Zhou H."/>
            <person name="Di Palma S."/>
            <person name="Preisinger C."/>
            <person name="Peng M."/>
            <person name="Polat A.N."/>
            <person name="Heck A.J."/>
            <person name="Mohammed S."/>
        </authorList>
    </citation>
    <scope>PHOSPHORYLATION [LARGE SCALE ANALYSIS] AT SER-255; SER-533; SER-558; SER-589; SER-925; SER-1692; SER-1697; SER-1699; SER-1712; SER-1838; SER-1854 AND SER-1903</scope>
    <scope>IDENTIFICATION BY MASS SPECTROMETRY [LARGE SCALE ANALYSIS]</scope>
    <source>
        <tissue>Cervix carcinoma</tissue>
        <tissue>Erythroleukemia</tissue>
    </source>
</reference>
<reference key="17">
    <citation type="journal article" date="2013" name="Mol. Cell">
        <title>The little elongation complex functions at initiation and elongation phases of snRNA gene transcription.</title>
        <authorList>
            <person name="Hu D."/>
            <person name="Smith E.R."/>
            <person name="Garruss A.S."/>
            <person name="Mohaghegh N."/>
            <person name="Varberg J.M."/>
            <person name="Lin C."/>
            <person name="Jackson J."/>
            <person name="Gao X."/>
            <person name="Saraf A."/>
            <person name="Florens L."/>
            <person name="Washburn M.P."/>
            <person name="Eissenberg J.C."/>
            <person name="Shilatifard A."/>
        </authorList>
    </citation>
    <scope>FUNCTION</scope>
    <scope>SUBCELLULAR LOCATION</scope>
    <scope>IDENTIFICATION IN THE LEC COMPLEX</scope>
    <scope>INTERACTION WITH ELL; ICE2 AND ZC3H8</scope>
</reference>
<reference key="18">
    <citation type="journal article" date="2014" name="J. Proteomics">
        <title>An enzyme assisted RP-RPLC approach for in-depth analysis of human liver phosphoproteome.</title>
        <authorList>
            <person name="Bian Y."/>
            <person name="Song C."/>
            <person name="Cheng K."/>
            <person name="Dong M."/>
            <person name="Wang F."/>
            <person name="Huang J."/>
            <person name="Sun D."/>
            <person name="Wang L."/>
            <person name="Ye M."/>
            <person name="Zou H."/>
        </authorList>
    </citation>
    <scope>PHOSPHORYLATION [LARGE SCALE ANALYSIS] AT THR-832 AND SER-1903</scope>
    <scope>IDENTIFICATION BY MASS SPECTROMETRY [LARGE SCALE ANALYSIS]</scope>
    <source>
        <tissue>Liver</tissue>
    </source>
</reference>
<protein>
    <recommendedName>
        <fullName>Little elongation complex subunit 1</fullName>
    </recommendedName>
    <alternativeName>
        <fullName>Interactor of little elongator complex ELL subunit 1</fullName>
    </alternativeName>
</protein>